<dbReference type="EMBL" id="Z99708">
    <property type="protein sequence ID" value="CAB16836.1"/>
    <property type="status" value="ALT_SEQ"/>
    <property type="molecule type" value="Genomic_DNA"/>
</dbReference>
<dbReference type="EMBL" id="AL161589">
    <property type="protein sequence ID" value="CAB80323.1"/>
    <property type="status" value="ALT_SEQ"/>
    <property type="molecule type" value="Genomic_DNA"/>
</dbReference>
<dbReference type="EMBL" id="CP002687">
    <property type="protein sequence ID" value="AEE86673.1"/>
    <property type="status" value="ALT_SEQ"/>
    <property type="molecule type" value="Genomic_DNA"/>
</dbReference>
<dbReference type="EMBL" id="BT010770">
    <property type="protein sequence ID" value="AAR24137.1"/>
    <property type="molecule type" value="mRNA"/>
</dbReference>
<dbReference type="EMBL" id="BT011255">
    <property type="protein sequence ID" value="AAR92291.1"/>
    <property type="molecule type" value="mRNA"/>
</dbReference>
<dbReference type="PIR" id="G85431">
    <property type="entry name" value="G85431"/>
</dbReference>
<dbReference type="RefSeq" id="NP_195375.4">
    <property type="nucleotide sequence ID" value="NM_119820.5"/>
</dbReference>
<dbReference type="SMR" id="Q6NNN0"/>
<dbReference type="BioGRID" id="15091">
    <property type="interactions" value="4"/>
</dbReference>
<dbReference type="FunCoup" id="Q6NNN0">
    <property type="interactions" value="56"/>
</dbReference>
<dbReference type="IntAct" id="Q6NNN0">
    <property type="interactions" value="2"/>
</dbReference>
<dbReference type="STRING" id="3702.Q6NNN0"/>
<dbReference type="PaxDb" id="3702-AT4G36570.1"/>
<dbReference type="PeptideAtlas" id="Q6NNN0"/>
<dbReference type="ProteomicsDB" id="236564"/>
<dbReference type="GeneID" id="829809"/>
<dbReference type="KEGG" id="ath:AT4G36570"/>
<dbReference type="Araport" id="AT4G36570"/>
<dbReference type="TAIR" id="AT4G36570"/>
<dbReference type="eggNOG" id="KOG0724">
    <property type="taxonomic scope" value="Eukaryota"/>
</dbReference>
<dbReference type="InParanoid" id="Q6NNN0"/>
<dbReference type="PhylomeDB" id="Q6NNN0"/>
<dbReference type="PRO" id="PR:Q6NNN0"/>
<dbReference type="Proteomes" id="UP000006548">
    <property type="component" value="Chromosome 4"/>
</dbReference>
<dbReference type="ExpressionAtlas" id="Q6NNN0">
    <property type="expression patterns" value="baseline and differential"/>
</dbReference>
<dbReference type="GO" id="GO:0005634">
    <property type="term" value="C:nucleus"/>
    <property type="evidence" value="ECO:0007669"/>
    <property type="project" value="UniProtKB-SubCell"/>
</dbReference>
<dbReference type="GO" id="GO:0003700">
    <property type="term" value="F:DNA-binding transcription factor activity"/>
    <property type="evidence" value="ECO:0000250"/>
    <property type="project" value="TAIR"/>
</dbReference>
<dbReference type="CDD" id="cd00167">
    <property type="entry name" value="SANT"/>
    <property type="match status" value="1"/>
</dbReference>
<dbReference type="FunFam" id="1.10.10.60:FF:000154">
    <property type="entry name" value="Transcription factor SRM1"/>
    <property type="match status" value="1"/>
</dbReference>
<dbReference type="Gene3D" id="1.10.10.60">
    <property type="entry name" value="Homeodomain-like"/>
    <property type="match status" value="1"/>
</dbReference>
<dbReference type="InterPro" id="IPR009057">
    <property type="entry name" value="Homeodomain-like_sf"/>
</dbReference>
<dbReference type="InterPro" id="IPR044636">
    <property type="entry name" value="RADIALIS-like"/>
</dbReference>
<dbReference type="InterPro" id="IPR001005">
    <property type="entry name" value="SANT/Myb"/>
</dbReference>
<dbReference type="InterPro" id="IPR017884">
    <property type="entry name" value="SANT_dom"/>
</dbReference>
<dbReference type="PANTHER" id="PTHR43952">
    <property type="entry name" value="MYB FAMILY TRANSCRIPTION FACTOR-RELATED"/>
    <property type="match status" value="1"/>
</dbReference>
<dbReference type="PANTHER" id="PTHR43952:SF17">
    <property type="entry name" value="PROTEIN RADIALIS-LIKE 3"/>
    <property type="match status" value="1"/>
</dbReference>
<dbReference type="Pfam" id="PF00249">
    <property type="entry name" value="Myb_DNA-binding"/>
    <property type="match status" value="1"/>
</dbReference>
<dbReference type="SMART" id="SM00717">
    <property type="entry name" value="SANT"/>
    <property type="match status" value="1"/>
</dbReference>
<dbReference type="SUPFAM" id="SSF46689">
    <property type="entry name" value="Homeodomain-like"/>
    <property type="match status" value="1"/>
</dbReference>
<dbReference type="PROSITE" id="PS51293">
    <property type="entry name" value="SANT"/>
    <property type="match status" value="1"/>
</dbReference>
<name>RADL3_ARATH</name>
<evidence type="ECO:0000250" key="1"/>
<evidence type="ECO:0000255" key="2">
    <source>
        <dbReference type="PROSITE-ProRule" id="PRU00624"/>
    </source>
</evidence>
<evidence type="ECO:0000269" key="3">
    <source>
    </source>
</evidence>
<evidence type="ECO:0000305" key="4"/>
<evidence type="ECO:0000305" key="5">
    <source>
    </source>
</evidence>
<gene>
    <name type="primary">RL3</name>
    <name type="ordered locus">At4g36570</name>
    <name type="ORF">AP22.24</name>
    <name type="ORF">C7A10.790</name>
</gene>
<sequence length="81" mass="9362">MASNSMSSSASWTRKENKLFERALATYDQDTPDRWHNVARAVGGKSAEEVRRHYELLIRDVNDIESGRYPHPNYRSNGNNH</sequence>
<accession>Q6NNN0</accession>
<accession>F4JQE8</accession>
<accession>O23224</accession>
<feature type="chain" id="PRO_0000419443" description="Protein RADIALIS-like 3">
    <location>
        <begin position="1"/>
        <end position="81"/>
    </location>
</feature>
<feature type="domain" description="SANT" evidence="2">
    <location>
        <begin position="7"/>
        <end position="62"/>
    </location>
</feature>
<proteinExistence type="evidence at transcript level"/>
<protein>
    <recommendedName>
        <fullName>Protein RADIALIS-like 3</fullName>
        <shortName>AtRL3</shortName>
        <shortName>Protein RAD-like 3</shortName>
    </recommendedName>
</protein>
<keyword id="KW-0539">Nucleus</keyword>
<keyword id="KW-1185">Reference proteome</keyword>
<keyword id="KW-0804">Transcription</keyword>
<keyword id="KW-0805">Transcription regulation</keyword>
<comment type="function">
    <text evidence="1">Probable transcription factor.</text>
</comment>
<comment type="subcellular location">
    <subcellularLocation>
        <location evidence="2">Nucleus</location>
    </subcellularLocation>
</comment>
<comment type="tissue specificity">
    <text evidence="3">Expressed just outside the vascular bundles in the rosette stem and the leaf traces. Not detected in floral primordia.</text>
</comment>
<comment type="miscellaneous">
    <text evidence="5">Assigned as a member of the MYB-related gene family, I-box-binding-like subfamily.</text>
</comment>
<comment type="sequence caution" evidence="4">
    <conflict type="erroneous gene model prediction">
        <sequence resource="EMBL-CDS" id="AEE86673"/>
    </conflict>
</comment>
<comment type="sequence caution" evidence="4">
    <conflict type="erroneous gene model prediction">
        <sequence resource="EMBL-CDS" id="CAB16836"/>
    </conflict>
</comment>
<comment type="sequence caution" evidence="4">
    <conflict type="erroneous gene model prediction">
        <sequence resource="EMBL-CDS" id="CAB80323"/>
    </conflict>
</comment>
<organism>
    <name type="scientific">Arabidopsis thaliana</name>
    <name type="common">Mouse-ear cress</name>
    <dbReference type="NCBI Taxonomy" id="3702"/>
    <lineage>
        <taxon>Eukaryota</taxon>
        <taxon>Viridiplantae</taxon>
        <taxon>Streptophyta</taxon>
        <taxon>Embryophyta</taxon>
        <taxon>Tracheophyta</taxon>
        <taxon>Spermatophyta</taxon>
        <taxon>Magnoliopsida</taxon>
        <taxon>eudicotyledons</taxon>
        <taxon>Gunneridae</taxon>
        <taxon>Pentapetalae</taxon>
        <taxon>rosids</taxon>
        <taxon>malvids</taxon>
        <taxon>Brassicales</taxon>
        <taxon>Brassicaceae</taxon>
        <taxon>Camelineae</taxon>
        <taxon>Arabidopsis</taxon>
    </lineage>
</organism>
<reference key="1">
    <citation type="journal article" date="1998" name="Nature">
        <title>Analysis of 1.9 Mb of contiguous sequence from chromosome 4 of Arabidopsis thaliana.</title>
        <authorList>
            <person name="Bevan M."/>
            <person name="Bancroft I."/>
            <person name="Bent E."/>
            <person name="Love K."/>
            <person name="Goodman H.M."/>
            <person name="Dean C."/>
            <person name="Bergkamp R."/>
            <person name="Dirkse W."/>
            <person name="van Staveren M."/>
            <person name="Stiekema W."/>
            <person name="Drost L."/>
            <person name="Ridley P."/>
            <person name="Hudson S.-A."/>
            <person name="Patel K."/>
            <person name="Murphy G."/>
            <person name="Piffanelli P."/>
            <person name="Wedler H."/>
            <person name="Wedler E."/>
            <person name="Wambutt R."/>
            <person name="Weitzenegger T."/>
            <person name="Pohl T."/>
            <person name="Terryn N."/>
            <person name="Gielen J."/>
            <person name="Villarroel R."/>
            <person name="De Clercq R."/>
            <person name="van Montagu M."/>
            <person name="Lecharny A."/>
            <person name="Aubourg S."/>
            <person name="Gy I."/>
            <person name="Kreis M."/>
            <person name="Lao N."/>
            <person name="Kavanagh T."/>
            <person name="Hempel S."/>
            <person name="Kotter P."/>
            <person name="Entian K.-D."/>
            <person name="Rieger M."/>
            <person name="Schaefer M."/>
            <person name="Funk B."/>
            <person name="Mueller-Auer S."/>
            <person name="Silvey M."/>
            <person name="James R."/>
            <person name="Monfort A."/>
            <person name="Pons A."/>
            <person name="Puigdomenech P."/>
            <person name="Douka A."/>
            <person name="Voukelatou E."/>
            <person name="Milioni D."/>
            <person name="Hatzopoulos P."/>
            <person name="Piravandi E."/>
            <person name="Obermaier B."/>
            <person name="Hilbert H."/>
            <person name="Duesterhoeft A."/>
            <person name="Moores T."/>
            <person name="Jones J.D.G."/>
            <person name="Eneva T."/>
            <person name="Palme K."/>
            <person name="Benes V."/>
            <person name="Rechmann S."/>
            <person name="Ansorge W."/>
            <person name="Cooke R."/>
            <person name="Berger C."/>
            <person name="Delseny M."/>
            <person name="Voet M."/>
            <person name="Volckaert G."/>
            <person name="Mewes H.-W."/>
            <person name="Klosterman S."/>
            <person name="Schueller C."/>
            <person name="Chalwatzis N."/>
        </authorList>
    </citation>
    <scope>NUCLEOTIDE SEQUENCE [LARGE SCALE GENOMIC DNA]</scope>
    <source>
        <strain>cv. Columbia</strain>
    </source>
</reference>
<reference key="2">
    <citation type="journal article" date="1999" name="Nature">
        <title>Sequence and analysis of chromosome 4 of the plant Arabidopsis thaliana.</title>
        <authorList>
            <person name="Mayer K.F.X."/>
            <person name="Schueller C."/>
            <person name="Wambutt R."/>
            <person name="Murphy G."/>
            <person name="Volckaert G."/>
            <person name="Pohl T."/>
            <person name="Duesterhoeft A."/>
            <person name="Stiekema W."/>
            <person name="Entian K.-D."/>
            <person name="Terryn N."/>
            <person name="Harris B."/>
            <person name="Ansorge W."/>
            <person name="Brandt P."/>
            <person name="Grivell L.A."/>
            <person name="Rieger M."/>
            <person name="Weichselgartner M."/>
            <person name="de Simone V."/>
            <person name="Obermaier B."/>
            <person name="Mache R."/>
            <person name="Mueller M."/>
            <person name="Kreis M."/>
            <person name="Delseny M."/>
            <person name="Puigdomenech P."/>
            <person name="Watson M."/>
            <person name="Schmidtheini T."/>
            <person name="Reichert B."/>
            <person name="Portetelle D."/>
            <person name="Perez-Alonso M."/>
            <person name="Boutry M."/>
            <person name="Bancroft I."/>
            <person name="Vos P."/>
            <person name="Hoheisel J."/>
            <person name="Zimmermann W."/>
            <person name="Wedler H."/>
            <person name="Ridley P."/>
            <person name="Langham S.-A."/>
            <person name="McCullagh B."/>
            <person name="Bilham L."/>
            <person name="Robben J."/>
            <person name="van der Schueren J."/>
            <person name="Grymonprez B."/>
            <person name="Chuang Y.-J."/>
            <person name="Vandenbussche F."/>
            <person name="Braeken M."/>
            <person name="Weltjens I."/>
            <person name="Voet M."/>
            <person name="Bastiaens I."/>
            <person name="Aert R."/>
            <person name="Defoor E."/>
            <person name="Weitzenegger T."/>
            <person name="Bothe G."/>
            <person name="Ramsperger U."/>
            <person name="Hilbert H."/>
            <person name="Braun M."/>
            <person name="Holzer E."/>
            <person name="Brandt A."/>
            <person name="Peters S."/>
            <person name="van Staveren M."/>
            <person name="Dirkse W."/>
            <person name="Mooijman P."/>
            <person name="Klein Lankhorst R."/>
            <person name="Rose M."/>
            <person name="Hauf J."/>
            <person name="Koetter P."/>
            <person name="Berneiser S."/>
            <person name="Hempel S."/>
            <person name="Feldpausch M."/>
            <person name="Lamberth S."/>
            <person name="Van den Daele H."/>
            <person name="De Keyser A."/>
            <person name="Buysshaert C."/>
            <person name="Gielen J."/>
            <person name="Villarroel R."/>
            <person name="De Clercq R."/>
            <person name="van Montagu M."/>
            <person name="Rogers J."/>
            <person name="Cronin A."/>
            <person name="Quail M.A."/>
            <person name="Bray-Allen S."/>
            <person name="Clark L."/>
            <person name="Doggett J."/>
            <person name="Hall S."/>
            <person name="Kay M."/>
            <person name="Lennard N."/>
            <person name="McLay K."/>
            <person name="Mayes R."/>
            <person name="Pettett A."/>
            <person name="Rajandream M.A."/>
            <person name="Lyne M."/>
            <person name="Benes V."/>
            <person name="Rechmann S."/>
            <person name="Borkova D."/>
            <person name="Bloecker H."/>
            <person name="Scharfe M."/>
            <person name="Grimm M."/>
            <person name="Loehnert T.-H."/>
            <person name="Dose S."/>
            <person name="de Haan M."/>
            <person name="Maarse A.C."/>
            <person name="Schaefer M."/>
            <person name="Mueller-Auer S."/>
            <person name="Gabel C."/>
            <person name="Fuchs M."/>
            <person name="Fartmann B."/>
            <person name="Granderath K."/>
            <person name="Dauner D."/>
            <person name="Herzl A."/>
            <person name="Neumann S."/>
            <person name="Argiriou A."/>
            <person name="Vitale D."/>
            <person name="Liguori R."/>
            <person name="Piravandi E."/>
            <person name="Massenet O."/>
            <person name="Quigley F."/>
            <person name="Clabauld G."/>
            <person name="Muendlein A."/>
            <person name="Felber R."/>
            <person name="Schnabl S."/>
            <person name="Hiller R."/>
            <person name="Schmidt W."/>
            <person name="Lecharny A."/>
            <person name="Aubourg S."/>
            <person name="Chefdor F."/>
            <person name="Cooke R."/>
            <person name="Berger C."/>
            <person name="Monfort A."/>
            <person name="Casacuberta E."/>
            <person name="Gibbons T."/>
            <person name="Weber N."/>
            <person name="Vandenbol M."/>
            <person name="Bargues M."/>
            <person name="Terol J."/>
            <person name="Torres A."/>
            <person name="Perez-Perez A."/>
            <person name="Purnelle B."/>
            <person name="Bent E."/>
            <person name="Johnson S."/>
            <person name="Tacon D."/>
            <person name="Jesse T."/>
            <person name="Heijnen L."/>
            <person name="Schwarz S."/>
            <person name="Scholler P."/>
            <person name="Heber S."/>
            <person name="Francs P."/>
            <person name="Bielke C."/>
            <person name="Frishman D."/>
            <person name="Haase D."/>
            <person name="Lemcke K."/>
            <person name="Mewes H.-W."/>
            <person name="Stocker S."/>
            <person name="Zaccaria P."/>
            <person name="Bevan M."/>
            <person name="Wilson R.K."/>
            <person name="de la Bastide M."/>
            <person name="Habermann K."/>
            <person name="Parnell L."/>
            <person name="Dedhia N."/>
            <person name="Gnoj L."/>
            <person name="Schutz K."/>
            <person name="Huang E."/>
            <person name="Spiegel L."/>
            <person name="Sekhon M."/>
            <person name="Murray J."/>
            <person name="Sheet P."/>
            <person name="Cordes M."/>
            <person name="Abu-Threideh J."/>
            <person name="Stoneking T."/>
            <person name="Kalicki J."/>
            <person name="Graves T."/>
            <person name="Harmon G."/>
            <person name="Edwards J."/>
            <person name="Latreille P."/>
            <person name="Courtney L."/>
            <person name="Cloud J."/>
            <person name="Abbott A."/>
            <person name="Scott K."/>
            <person name="Johnson D."/>
            <person name="Minx P."/>
            <person name="Bentley D."/>
            <person name="Fulton B."/>
            <person name="Miller N."/>
            <person name="Greco T."/>
            <person name="Kemp K."/>
            <person name="Kramer J."/>
            <person name="Fulton L."/>
            <person name="Mardis E."/>
            <person name="Dante M."/>
            <person name="Pepin K."/>
            <person name="Hillier L.W."/>
            <person name="Nelson J."/>
            <person name="Spieth J."/>
            <person name="Ryan E."/>
            <person name="Andrews S."/>
            <person name="Geisel C."/>
            <person name="Layman D."/>
            <person name="Du H."/>
            <person name="Ali J."/>
            <person name="Berghoff A."/>
            <person name="Jones K."/>
            <person name="Drone K."/>
            <person name="Cotton M."/>
            <person name="Joshu C."/>
            <person name="Antonoiu B."/>
            <person name="Zidanic M."/>
            <person name="Strong C."/>
            <person name="Sun H."/>
            <person name="Lamar B."/>
            <person name="Yordan C."/>
            <person name="Ma P."/>
            <person name="Zhong J."/>
            <person name="Preston R."/>
            <person name="Vil D."/>
            <person name="Shekher M."/>
            <person name="Matero A."/>
            <person name="Shah R."/>
            <person name="Swaby I.K."/>
            <person name="O'Shaughnessy A."/>
            <person name="Rodriguez M."/>
            <person name="Hoffman J."/>
            <person name="Till S."/>
            <person name="Granat S."/>
            <person name="Shohdy N."/>
            <person name="Hasegawa A."/>
            <person name="Hameed A."/>
            <person name="Lodhi M."/>
            <person name="Johnson A."/>
            <person name="Chen E."/>
            <person name="Marra M.A."/>
            <person name="Martienssen R."/>
            <person name="McCombie W.R."/>
        </authorList>
    </citation>
    <scope>NUCLEOTIDE SEQUENCE [LARGE SCALE GENOMIC DNA]</scope>
    <source>
        <strain>cv. Columbia</strain>
    </source>
</reference>
<reference key="3">
    <citation type="journal article" date="2017" name="Plant J.">
        <title>Araport11: a complete reannotation of the Arabidopsis thaliana reference genome.</title>
        <authorList>
            <person name="Cheng C.Y."/>
            <person name="Krishnakumar V."/>
            <person name="Chan A.P."/>
            <person name="Thibaud-Nissen F."/>
            <person name="Schobel S."/>
            <person name="Town C.D."/>
        </authorList>
    </citation>
    <scope>GENOME REANNOTATION</scope>
    <source>
        <strain>cv. Columbia</strain>
    </source>
</reference>
<reference key="4">
    <citation type="submission" date="2004-01" db="EMBL/GenBank/DDBJ databases">
        <title>Arabidopsis ORF clones.</title>
        <authorList>
            <person name="Cheuk R."/>
            <person name="Chen H."/>
            <person name="Kim C.J."/>
            <person name="Shinn P."/>
            <person name="Ecker J.R."/>
        </authorList>
    </citation>
    <scope>NUCLEOTIDE SEQUENCE [LARGE SCALE MRNA]</scope>
    <source>
        <strain>cv. Columbia</strain>
    </source>
</reference>
<reference key="5">
    <citation type="journal article" date="2006" name="Plant Mol. Biol.">
        <title>The MYB transcription factor superfamily of Arabidopsis: expression analysis and phylogenetic comparison with the rice MYB family.</title>
        <authorList>
            <person name="Chen Y."/>
            <person name="Yang X."/>
            <person name="He K."/>
            <person name="Liu M."/>
            <person name="Li J."/>
            <person name="Gao Z."/>
            <person name="Lin Z."/>
            <person name="Zhang Y."/>
            <person name="Wang X."/>
            <person name="Qiu X."/>
            <person name="Shen Y."/>
            <person name="Zhang L."/>
            <person name="Deng X."/>
            <person name="Luo J."/>
            <person name="Deng X.-W."/>
            <person name="Chen Z."/>
            <person name="Gu H."/>
            <person name="Qu L.-J."/>
        </authorList>
    </citation>
    <scope>GENE FAMILY</scope>
</reference>
<reference key="6">
    <citation type="journal article" date="2007" name="Plant J.">
        <title>Diversification and co-option of RAD-like genes in the evolution of floral asymmetry.</title>
        <authorList>
            <person name="Baxter C.E.L."/>
            <person name="Costa M.M.R."/>
            <person name="Coen E.S."/>
        </authorList>
    </citation>
    <scope>GENE FAMILY</scope>
    <scope>TISSUE SPECIFICITY</scope>
</reference>
<reference key="7">
    <citation type="journal article" date="2008" name="Biosci. Biotechnol. Biochem.">
        <title>A small subfamily of Arabidopsis RADIALIS-LIKE SANT/MYB genes: a link to HOOKLESS1-mediated signal transduction during early morphogenesis.</title>
        <authorList>
            <person name="Hamaguchi A."/>
            <person name="Yamashino T."/>
            <person name="Koizumi N."/>
            <person name="Kiba T."/>
            <person name="Kojima M."/>
            <person name="Sakakibara H."/>
            <person name="Mizuno T."/>
        </authorList>
    </citation>
    <scope>GENE FAMILY</scope>
</reference>